<feature type="chain" id="PRO_0000314150" description="Probable RNA-binding protein EIF1AD">
    <location>
        <begin position="1"/>
        <end position="166"/>
    </location>
</feature>
<feature type="domain" description="S1-like" evidence="6">
    <location>
        <begin position="5"/>
        <end position="89"/>
    </location>
</feature>
<feature type="region of interest" description="Disordered" evidence="7">
    <location>
        <begin position="99"/>
        <end position="166"/>
    </location>
</feature>
<feature type="short sequence motif" description="Nuclear localization signal" evidence="5">
    <location>
        <begin position="6"/>
        <end position="12"/>
    </location>
</feature>
<feature type="short sequence motif" description="Nuclear localization signal" evidence="5">
    <location>
        <begin position="56"/>
        <end position="65"/>
    </location>
</feature>
<feature type="compositionally biased region" description="Basic and acidic residues" evidence="7">
    <location>
        <begin position="110"/>
        <end position="119"/>
    </location>
</feature>
<feature type="compositionally biased region" description="Acidic residues" evidence="7">
    <location>
        <begin position="156"/>
        <end position="166"/>
    </location>
</feature>
<feature type="modified residue" description="Phosphothreonine" evidence="4">
    <location>
        <position position="33"/>
    </location>
</feature>
<feature type="modified residue" description="Phosphoserine" evidence="2">
    <location>
        <position position="132"/>
    </location>
</feature>
<feature type="modified residue" description="Phosphoserine" evidence="3">
    <location>
        <position position="136"/>
    </location>
</feature>
<feature type="modified residue" description="Phosphoserine" evidence="2">
    <location>
        <position position="137"/>
    </location>
</feature>
<feature type="modified residue" description="Phosphoserine" evidence="3">
    <location>
        <position position="138"/>
    </location>
</feature>
<feature type="modified residue" description="Phosphoserine" evidence="4">
    <location>
        <position position="156"/>
    </location>
</feature>
<feature type="modified residue" description="Phosphoserine" evidence="4">
    <location>
        <position position="160"/>
    </location>
</feature>
<feature type="sequence conflict" description="In Ref. 2; AAI20114." evidence="8" ref="2">
    <original>V</original>
    <variation>M</variation>
    <location>
        <position position="28"/>
    </location>
</feature>
<feature type="sequence conflict" description="In Ref. 2; AAI20114." evidence="8" ref="2">
    <original>L</original>
    <variation>F</variation>
    <location>
        <position position="125"/>
    </location>
</feature>
<keyword id="KW-0539">Nucleus</keyword>
<keyword id="KW-0597">Phosphoprotein</keyword>
<keyword id="KW-1185">Reference proteome</keyword>
<keyword id="KW-0694">RNA-binding</keyword>
<protein>
    <recommendedName>
        <fullName>Probable RNA-binding protein EIF1AD</fullName>
    </recommendedName>
    <alternativeName>
        <fullName>Eukaryotic translation initiation factor 1A domain-containing protein</fullName>
    </alternativeName>
</protein>
<comment type="function">
    <text evidence="1">Plays a role into cellular response to oxidative stress. Decreases cell proliferation (By similarity).</text>
</comment>
<comment type="subunit">
    <text evidence="1">Interacts with GAPDH and STAT1.</text>
</comment>
<comment type="subcellular location">
    <subcellularLocation>
        <location evidence="1">Nucleus</location>
    </subcellularLocation>
</comment>
<comment type="similarity">
    <text evidence="8">Belongs to the EIF1AD family.</text>
</comment>
<proteinExistence type="evidence at transcript level"/>
<gene>
    <name type="primary">EIF1AD</name>
</gene>
<evidence type="ECO:0000250" key="1"/>
<evidence type="ECO:0000250" key="2">
    <source>
        <dbReference type="UniProtKB" id="Q3THJ3"/>
    </source>
</evidence>
<evidence type="ECO:0000250" key="3">
    <source>
        <dbReference type="UniProtKB" id="Q5RKI6"/>
    </source>
</evidence>
<evidence type="ECO:0000250" key="4">
    <source>
        <dbReference type="UniProtKB" id="Q8N9N8"/>
    </source>
</evidence>
<evidence type="ECO:0000255" key="5"/>
<evidence type="ECO:0000255" key="6">
    <source>
        <dbReference type="PROSITE-ProRule" id="PRU00181"/>
    </source>
</evidence>
<evidence type="ECO:0000256" key="7">
    <source>
        <dbReference type="SAM" id="MobiDB-lite"/>
    </source>
</evidence>
<evidence type="ECO:0000305" key="8"/>
<reference key="1">
    <citation type="journal article" date="2005" name="BMC Genomics">
        <title>Characterization of 954 bovine full-CDS cDNA sequences.</title>
        <authorList>
            <person name="Harhay G.P."/>
            <person name="Sonstegard T.S."/>
            <person name="Keele J.W."/>
            <person name="Heaton M.P."/>
            <person name="Clawson M.L."/>
            <person name="Snelling W.M."/>
            <person name="Wiedmann R.T."/>
            <person name="Van Tassell C.P."/>
            <person name="Smith T.P.L."/>
        </authorList>
    </citation>
    <scope>NUCLEOTIDE SEQUENCE [LARGE SCALE MRNA]</scope>
</reference>
<reference key="2">
    <citation type="submission" date="2006-08" db="EMBL/GenBank/DDBJ databases">
        <authorList>
            <consortium name="NIH - Mammalian Gene Collection (MGC) project"/>
        </authorList>
    </citation>
    <scope>NUCLEOTIDE SEQUENCE [LARGE SCALE MRNA]</scope>
    <source>
        <strain>Hereford</strain>
        <tissue>Fetal pons</tissue>
    </source>
</reference>
<reference key="3">
    <citation type="submission" date="2006-02" db="EMBL/GenBank/DDBJ databases">
        <title>Estimating probability of parentage in U.S. beef and dairy cattle with single nucleotide polymorphisms.</title>
        <authorList>
            <person name="Heaton M.P."/>
            <person name="Clawson M.L."/>
            <person name="Snelling W.M."/>
            <person name="Keele J.W."/>
            <person name="Harhay G.P."/>
            <person name="Wiedmann R.T."/>
            <person name="Bennett G.L."/>
            <person name="Smith T.P.L."/>
            <person name="Freking B.A."/>
            <person name="Van Tassell C.P."/>
            <person name="Sonstegard T.S."/>
            <person name="Gasbarre L.C."/>
            <person name="Moore S.S."/>
            <person name="Murdoch B."/>
            <person name="McKay S.D."/>
            <person name="Kalbfleisch T."/>
            <person name="Laegreid W.W."/>
        </authorList>
    </citation>
    <scope>NUCLEOTIDE SEQUENCE [GENOMIC DNA] OF 30-166</scope>
</reference>
<organism>
    <name type="scientific">Bos taurus</name>
    <name type="common">Bovine</name>
    <dbReference type="NCBI Taxonomy" id="9913"/>
    <lineage>
        <taxon>Eukaryota</taxon>
        <taxon>Metazoa</taxon>
        <taxon>Chordata</taxon>
        <taxon>Craniata</taxon>
        <taxon>Vertebrata</taxon>
        <taxon>Euteleostomi</taxon>
        <taxon>Mammalia</taxon>
        <taxon>Eutheria</taxon>
        <taxon>Laurasiatheria</taxon>
        <taxon>Artiodactyla</taxon>
        <taxon>Ruminantia</taxon>
        <taxon>Pecora</taxon>
        <taxon>Bovidae</taxon>
        <taxon>Bovinae</taxon>
        <taxon>Bos</taxon>
    </lineage>
</organism>
<sequence>MSQATKRKHVVKEVLGEHMVPSDQQQIVRVLRTPGNNLHEVETAQGQRFLVSMPSKYRKNIWIKRGDFLIVDPIEEGEKVKAEISFVLCKDHVRSLQKDGHWPEAFSQVTEKDNNDRNRQTQPELPAEPQSSGEESSSEDDSDLFVNTNRRQYHESEEESEEEEAA</sequence>
<accession>Q58CY2</accession>
<accession>Q0VCL0</accession>
<accession>Q27HF3</accession>
<name>EIF1A_BOVIN</name>
<dbReference type="EMBL" id="BT021815">
    <property type="protein sequence ID" value="AAX46662.1"/>
    <property type="molecule type" value="mRNA"/>
</dbReference>
<dbReference type="EMBL" id="BC120113">
    <property type="protein sequence ID" value="AAI20114.1"/>
    <property type="molecule type" value="mRNA"/>
</dbReference>
<dbReference type="EMBL" id="DQ404153">
    <property type="protein sequence ID" value="ABD57202.1"/>
    <property type="molecule type" value="Genomic_DNA"/>
</dbReference>
<dbReference type="RefSeq" id="NP_001069861.1">
    <property type="nucleotide sequence ID" value="NM_001076393.1"/>
</dbReference>
<dbReference type="SMR" id="Q58CY2"/>
<dbReference type="FunCoup" id="Q58CY2">
    <property type="interactions" value="4007"/>
</dbReference>
<dbReference type="STRING" id="9913.ENSBTAP00000069164"/>
<dbReference type="PaxDb" id="9913-ENSBTAP00000026889"/>
<dbReference type="GeneID" id="615726"/>
<dbReference type="KEGG" id="bta:615726"/>
<dbReference type="CTD" id="84285"/>
<dbReference type="VEuPathDB" id="HostDB:ENSBTAG00000020186"/>
<dbReference type="eggNOG" id="KOG2925">
    <property type="taxonomic scope" value="Eukaryota"/>
</dbReference>
<dbReference type="HOGENOM" id="CLU_106477_2_1_1"/>
<dbReference type="InParanoid" id="Q58CY2"/>
<dbReference type="OMA" id="FRKNIWV"/>
<dbReference type="OrthoDB" id="1738325at2759"/>
<dbReference type="TreeFam" id="TF314439"/>
<dbReference type="Proteomes" id="UP000009136">
    <property type="component" value="Chromosome 29"/>
</dbReference>
<dbReference type="Bgee" id="ENSBTAG00000020186">
    <property type="expression patterns" value="Expressed in oocyte and 103 other cell types or tissues"/>
</dbReference>
<dbReference type="GO" id="GO:0005634">
    <property type="term" value="C:nucleus"/>
    <property type="evidence" value="ECO:0000318"/>
    <property type="project" value="GO_Central"/>
</dbReference>
<dbReference type="GO" id="GO:0003723">
    <property type="term" value="F:RNA binding"/>
    <property type="evidence" value="ECO:0007669"/>
    <property type="project" value="UniProtKB-KW"/>
</dbReference>
<dbReference type="GO" id="GO:0003743">
    <property type="term" value="F:translation initiation factor activity"/>
    <property type="evidence" value="ECO:0007669"/>
    <property type="project" value="InterPro"/>
</dbReference>
<dbReference type="CDD" id="cd05792">
    <property type="entry name" value="S1_eIF1AD_like"/>
    <property type="match status" value="1"/>
</dbReference>
<dbReference type="Gene3D" id="1.10.1200.180">
    <property type="match status" value="1"/>
</dbReference>
<dbReference type="Gene3D" id="2.40.50.140">
    <property type="entry name" value="Nucleic acid-binding proteins"/>
    <property type="match status" value="1"/>
</dbReference>
<dbReference type="InterPro" id="IPR039294">
    <property type="entry name" value="EIF1AD"/>
</dbReference>
<dbReference type="InterPro" id="IPR012340">
    <property type="entry name" value="NA-bd_OB-fold"/>
</dbReference>
<dbReference type="InterPro" id="IPR006196">
    <property type="entry name" value="RNA-binding_domain_S1_IF1"/>
</dbReference>
<dbReference type="InterPro" id="IPR001253">
    <property type="entry name" value="TIF_eIF-1A"/>
</dbReference>
<dbReference type="PANTHER" id="PTHR21641:SF0">
    <property type="entry name" value="RNA-BINDING PROTEIN EIF1AD-RELATED"/>
    <property type="match status" value="1"/>
</dbReference>
<dbReference type="PANTHER" id="PTHR21641">
    <property type="entry name" value="TRANSLATION INITIATION FACTOR-RELATED"/>
    <property type="match status" value="1"/>
</dbReference>
<dbReference type="Pfam" id="PF01176">
    <property type="entry name" value="eIF-1a"/>
    <property type="match status" value="1"/>
</dbReference>
<dbReference type="SMART" id="SM00652">
    <property type="entry name" value="eIF1a"/>
    <property type="match status" value="1"/>
</dbReference>
<dbReference type="SUPFAM" id="SSF50249">
    <property type="entry name" value="Nucleic acid-binding proteins"/>
    <property type="match status" value="1"/>
</dbReference>
<dbReference type="PROSITE" id="PS50832">
    <property type="entry name" value="S1_IF1_TYPE"/>
    <property type="match status" value="1"/>
</dbReference>